<dbReference type="EMBL" id="AF157706">
    <property type="protein sequence ID" value="AAD49633.1"/>
    <property type="status" value="ALT_INIT"/>
    <property type="molecule type" value="Genomic_DNA"/>
</dbReference>
<dbReference type="RefSeq" id="NP_050201.1">
    <property type="nucleotide sequence ID" value="NC_000898.1"/>
</dbReference>
<dbReference type="GlyCosmos" id="Q9QJ45">
    <property type="glycosylation" value="2 sites, No reported glycans"/>
</dbReference>
<dbReference type="DNASU" id="1497017"/>
<dbReference type="GeneID" id="1497017"/>
<dbReference type="KEGG" id="vg:1497017"/>
<dbReference type="Proteomes" id="UP000006930">
    <property type="component" value="Segment"/>
</dbReference>
<dbReference type="GO" id="GO:0044167">
    <property type="term" value="C:host cell endoplasmic reticulum membrane"/>
    <property type="evidence" value="ECO:0007669"/>
    <property type="project" value="UniProtKB-SubCell"/>
</dbReference>
<dbReference type="GO" id="GO:0044188">
    <property type="term" value="C:host cell lysosomal membrane"/>
    <property type="evidence" value="ECO:0007669"/>
    <property type="project" value="UniProtKB-SubCell"/>
</dbReference>
<dbReference type="GO" id="GO:0016020">
    <property type="term" value="C:membrane"/>
    <property type="evidence" value="ECO:0007669"/>
    <property type="project" value="UniProtKB-KW"/>
</dbReference>
<dbReference type="GO" id="GO:0052170">
    <property type="term" value="P:symbiont-mediated suppression of host innate immune response"/>
    <property type="evidence" value="ECO:0007669"/>
    <property type="project" value="UniProtKB-KW"/>
</dbReference>
<comment type="function">
    <text evidence="3">Plays a role in escape from immune detection by associating with and diverting properly folded class I MHC molecules to an endolysosomal compartment, effectively removing them from the cell surface. In consequence, surface class I molecules are down-regulated and infected cells are masked for immune recognition by cytotoxic T lymphocytes.</text>
</comment>
<comment type="subcellular location">
    <subcellularLocation>
        <location evidence="3">Host endoplasmic reticulum membrane</location>
        <topology evidence="4">Single-pass membrane protein</topology>
    </subcellularLocation>
    <subcellularLocation>
        <location evidence="3">Host lysosome membrane</location>
        <topology evidence="4">Single-pass type I membrane protein</topology>
    </subcellularLocation>
</comment>
<comment type="domain">
    <text evidence="1">The ER-lumenal domain associates with class I MHC molecules and is responsible for lysosomal sorting.</text>
</comment>
<comment type="similarity">
    <text evidence="4">Belongs to the herpesviridae U21 family.</text>
</comment>
<comment type="sequence caution" evidence="4">
    <conflict type="erroneous initiation">
        <sequence resource="EMBL-CDS" id="AAD49633"/>
    </conflict>
</comment>
<sequence length="433" mass="49499">MMICFVFLCVLTFVRGEIYPSTCPALGAGNGEAVRSGEMLLEISAYRNWRSGKMELWGSAAVNNQVFYGGMEDSQIEYDFGKFLVFRCFQVFHNVHKLLFNTVSSATMHLARKRVQKCGHGKMTFISIQVQCSVNKKSIRLSRMNETNLKKQVLRVAFFLDGSNNSWIADKNFQGEDRTMLRLWTELSTYRQYLISSCNNDVKVLSELYGEFRRMALSYDEELKLNFMPVIRSSSERLFRADDLKCSFSRWLGAEGEFAVCEYSGWGVSKLGKIEIFAEEPLTFDMVWKTVKMRSSGAYTSLFRDDVTWGLISLDKWVGDKYFCMCTNKESGDNVIVTLPEKNVEKSIQIYNEGSTMLAFAEITSIMVNLMFMGAVAVCVGILGISCFVGLKEIIYFIFVSVNSMWPFCNKLLTTAVNCFFKGRTFLRRELKI</sequence>
<evidence type="ECO:0000250" key="1"/>
<evidence type="ECO:0000255" key="2"/>
<evidence type="ECO:0000269" key="3">
    <source>
    </source>
</evidence>
<evidence type="ECO:0000305" key="4"/>
<reference key="1">
    <citation type="journal article" date="1999" name="J. Virol.">
        <title>Human herpesvirus 6B genome sequence: coding content and comparison with human herpesvirus 6A.</title>
        <authorList>
            <person name="Dominguez G."/>
            <person name="Dambaugh T.R."/>
            <person name="Stamey F.R."/>
            <person name="Dewhurst S."/>
            <person name="Inoue N."/>
            <person name="Pellett P.E."/>
        </authorList>
    </citation>
    <scope>NUCLEOTIDE SEQUENCE [LARGE SCALE GENOMIC DNA]</scope>
</reference>
<reference key="2">
    <citation type="journal article" date="2007" name="Virology">
        <title>Human herpesvirus-6A and -6B encode viral immunoevasins that downregulate class I MHC molecules.</title>
        <authorList>
            <person name="Glosson N.L."/>
            <person name="Hudson A.W."/>
        </authorList>
    </citation>
    <scope>FUNCTION</scope>
    <scope>SUBCELLULAR LOCATION</scope>
</reference>
<keyword id="KW-0325">Glycoprotein</keyword>
<keyword id="KW-1038">Host endoplasmic reticulum</keyword>
<keyword id="KW-1042">Host lysosome</keyword>
<keyword id="KW-1043">Host membrane</keyword>
<keyword id="KW-0945">Host-virus interaction</keyword>
<keyword id="KW-1090">Inhibition of host innate immune response by virus</keyword>
<keyword id="KW-0472">Membrane</keyword>
<keyword id="KW-1185">Reference proteome</keyword>
<keyword id="KW-0812">Transmembrane</keyword>
<keyword id="KW-1133">Transmembrane helix</keyword>
<keyword id="KW-0899">Viral immunoevasion</keyword>
<name>U21_HHV6Z</name>
<gene>
    <name type="primary">U21</name>
</gene>
<organism>
    <name type="scientific">Human herpesvirus 6B (strain Z29)</name>
    <name type="common">HHV-6 variant B</name>
    <name type="synonym">Human B lymphotropic virus</name>
    <dbReference type="NCBI Taxonomy" id="36351"/>
    <lineage>
        <taxon>Viruses</taxon>
        <taxon>Duplodnaviria</taxon>
        <taxon>Heunggongvirae</taxon>
        <taxon>Peploviricota</taxon>
        <taxon>Herviviricetes</taxon>
        <taxon>Herpesvirales</taxon>
        <taxon>Orthoherpesviridae</taxon>
        <taxon>Betaherpesvirinae</taxon>
        <taxon>Roseolovirus</taxon>
        <taxon>Roseolovirus humanbeta6b</taxon>
        <taxon>Human herpesvirus 6B</taxon>
    </lineage>
</organism>
<organismHost>
    <name type="scientific">Homo sapiens</name>
    <name type="common">Human</name>
    <dbReference type="NCBI Taxonomy" id="9606"/>
</organismHost>
<protein>
    <recommendedName>
        <fullName>U21 glycoprotein</fullName>
    </recommendedName>
</protein>
<accession>Q9QJ45</accession>
<proteinExistence type="inferred from homology"/>
<feature type="chain" id="PRO_0000116356" description="U21 glycoprotein">
    <location>
        <begin position="1"/>
        <end position="433"/>
    </location>
</feature>
<feature type="topological domain" description="Lumenal" evidence="2">
    <location>
        <begin position="1"/>
        <end position="370"/>
    </location>
</feature>
<feature type="transmembrane region" description="Helical" evidence="2">
    <location>
        <begin position="371"/>
        <end position="391"/>
    </location>
</feature>
<feature type="topological domain" description="Cytoplasmic" evidence="2">
    <location>
        <begin position="392"/>
        <end position="433"/>
    </location>
</feature>
<feature type="glycosylation site" description="N-linked (GlcNAc...) asparagine; by host" evidence="2">
    <location>
        <position position="145"/>
    </location>
</feature>
<feature type="glycosylation site" description="N-linked (GlcNAc...) asparagine; by host" evidence="2">
    <location>
        <position position="164"/>
    </location>
</feature>